<gene>
    <name type="primary">rps18</name>
    <name type="ORF">DDB_G0276415</name>
</gene>
<comment type="function">
    <text evidence="1">Located at the top of the head of the 40S subunit, it contacts several helices of the 18S rRNA.</text>
</comment>
<comment type="subcellular location">
    <subcellularLocation>
        <location evidence="1">Cytoplasm</location>
    </subcellularLocation>
</comment>
<comment type="similarity">
    <text evidence="2">Belongs to the universal ribosomal protein uS13 family.</text>
</comment>
<evidence type="ECO:0000250" key="1"/>
<evidence type="ECO:0000305" key="2"/>
<sequence length="154" mass="17921">MSSSLVFQGEFQHIIRIYNTNVDGRRKIQYALTCVKGVGRRFANLVCKKADIDTSKRAGELSKDEVERLTTIMNHPRQYNIPTWFLNRQKDIKDGKYSHCLANQIDVKFREDLERLKKIRAHRGVRHHFGLRVRGQKTKTTGRRGRTVGVAGRR</sequence>
<organism>
    <name type="scientific">Dictyostelium discoideum</name>
    <name type="common">Social amoeba</name>
    <dbReference type="NCBI Taxonomy" id="44689"/>
    <lineage>
        <taxon>Eukaryota</taxon>
        <taxon>Amoebozoa</taxon>
        <taxon>Evosea</taxon>
        <taxon>Eumycetozoa</taxon>
        <taxon>Dictyostelia</taxon>
        <taxon>Dictyosteliales</taxon>
        <taxon>Dictyosteliaceae</taxon>
        <taxon>Dictyostelium</taxon>
    </lineage>
</organism>
<reference key="1">
    <citation type="journal article" date="2002" name="Nature">
        <title>Sequence and analysis of chromosome 2 of Dictyostelium discoideum.</title>
        <authorList>
            <person name="Gloeckner G."/>
            <person name="Eichinger L."/>
            <person name="Szafranski K."/>
            <person name="Pachebat J.A."/>
            <person name="Bankier A.T."/>
            <person name="Dear P.H."/>
            <person name="Lehmann R."/>
            <person name="Baumgart C."/>
            <person name="Parra G."/>
            <person name="Abril J.F."/>
            <person name="Guigo R."/>
            <person name="Kumpf K."/>
            <person name="Tunggal B."/>
            <person name="Cox E.C."/>
            <person name="Quail M.A."/>
            <person name="Platzer M."/>
            <person name="Rosenthal A."/>
            <person name="Noegel A.A."/>
        </authorList>
    </citation>
    <scope>NUCLEOTIDE SEQUENCE [LARGE SCALE GENOMIC DNA]</scope>
    <source>
        <strain>AX4</strain>
    </source>
</reference>
<reference key="2">
    <citation type="journal article" date="2005" name="Nature">
        <title>The genome of the social amoeba Dictyostelium discoideum.</title>
        <authorList>
            <person name="Eichinger L."/>
            <person name="Pachebat J.A."/>
            <person name="Gloeckner G."/>
            <person name="Rajandream M.A."/>
            <person name="Sucgang R."/>
            <person name="Berriman M."/>
            <person name="Song J."/>
            <person name="Olsen R."/>
            <person name="Szafranski K."/>
            <person name="Xu Q."/>
            <person name="Tunggal B."/>
            <person name="Kummerfeld S."/>
            <person name="Madera M."/>
            <person name="Konfortov B.A."/>
            <person name="Rivero F."/>
            <person name="Bankier A.T."/>
            <person name="Lehmann R."/>
            <person name="Hamlin N."/>
            <person name="Davies R."/>
            <person name="Gaudet P."/>
            <person name="Fey P."/>
            <person name="Pilcher K."/>
            <person name="Chen G."/>
            <person name="Saunders D."/>
            <person name="Sodergren E.J."/>
            <person name="Davis P."/>
            <person name="Kerhornou A."/>
            <person name="Nie X."/>
            <person name="Hall N."/>
            <person name="Anjard C."/>
            <person name="Hemphill L."/>
            <person name="Bason N."/>
            <person name="Farbrother P."/>
            <person name="Desany B."/>
            <person name="Just E."/>
            <person name="Morio T."/>
            <person name="Rost R."/>
            <person name="Churcher C.M."/>
            <person name="Cooper J."/>
            <person name="Haydock S."/>
            <person name="van Driessche N."/>
            <person name="Cronin A."/>
            <person name="Goodhead I."/>
            <person name="Muzny D.M."/>
            <person name="Mourier T."/>
            <person name="Pain A."/>
            <person name="Lu M."/>
            <person name="Harper D."/>
            <person name="Lindsay R."/>
            <person name="Hauser H."/>
            <person name="James K.D."/>
            <person name="Quiles M."/>
            <person name="Madan Babu M."/>
            <person name="Saito T."/>
            <person name="Buchrieser C."/>
            <person name="Wardroper A."/>
            <person name="Felder M."/>
            <person name="Thangavelu M."/>
            <person name="Johnson D."/>
            <person name="Knights A."/>
            <person name="Loulseged H."/>
            <person name="Mungall K.L."/>
            <person name="Oliver K."/>
            <person name="Price C."/>
            <person name="Quail M.A."/>
            <person name="Urushihara H."/>
            <person name="Hernandez J."/>
            <person name="Rabbinowitsch E."/>
            <person name="Steffen D."/>
            <person name="Sanders M."/>
            <person name="Ma J."/>
            <person name="Kohara Y."/>
            <person name="Sharp S."/>
            <person name="Simmonds M.N."/>
            <person name="Spiegler S."/>
            <person name="Tivey A."/>
            <person name="Sugano S."/>
            <person name="White B."/>
            <person name="Walker D."/>
            <person name="Woodward J.R."/>
            <person name="Winckler T."/>
            <person name="Tanaka Y."/>
            <person name="Shaulsky G."/>
            <person name="Schleicher M."/>
            <person name="Weinstock G.M."/>
            <person name="Rosenthal A."/>
            <person name="Cox E.C."/>
            <person name="Chisholm R.L."/>
            <person name="Gibbs R.A."/>
            <person name="Loomis W.F."/>
            <person name="Platzer M."/>
            <person name="Kay R.R."/>
            <person name="Williams J.G."/>
            <person name="Dear P.H."/>
            <person name="Noegel A.A."/>
            <person name="Barrell B.G."/>
            <person name="Kuspa A."/>
        </authorList>
    </citation>
    <scope>NUCLEOTIDE SEQUENCE [LARGE SCALE GENOMIC DNA]</scope>
    <source>
        <strain>AX4</strain>
    </source>
</reference>
<feature type="chain" id="PRO_0000326195" description="Small ribosomal subunit protein uS13">
    <location>
        <begin position="1"/>
        <end position="154"/>
    </location>
</feature>
<name>RS18_DICDI</name>
<proteinExistence type="inferred from homology"/>
<keyword id="KW-0963">Cytoplasm</keyword>
<keyword id="KW-1185">Reference proteome</keyword>
<keyword id="KW-0687">Ribonucleoprotein</keyword>
<keyword id="KW-0689">Ribosomal protein</keyword>
<keyword id="KW-0694">RNA-binding</keyword>
<keyword id="KW-0699">rRNA-binding</keyword>
<protein>
    <recommendedName>
        <fullName evidence="2">Small ribosomal subunit protein uS13</fullName>
    </recommendedName>
    <alternativeName>
        <fullName>40S ribosomal protein S18</fullName>
    </alternativeName>
</protein>
<dbReference type="EMBL" id="AAFI02000015">
    <property type="protein sequence ID" value="EAL69161.1"/>
    <property type="molecule type" value="Genomic_DNA"/>
</dbReference>
<dbReference type="RefSeq" id="XP_643120.1">
    <property type="nucleotide sequence ID" value="XM_638028.1"/>
</dbReference>
<dbReference type="SMR" id="Q869U7"/>
<dbReference type="FunCoup" id="Q869U7">
    <property type="interactions" value="564"/>
</dbReference>
<dbReference type="STRING" id="44689.Q869U7"/>
<dbReference type="PaxDb" id="44689-DDB0231058"/>
<dbReference type="EnsemblProtists" id="EAL69161">
    <property type="protein sequence ID" value="EAL69161"/>
    <property type="gene ID" value="DDB_G0276415"/>
</dbReference>
<dbReference type="GeneID" id="8620525"/>
<dbReference type="KEGG" id="ddi:DDB_G0276415"/>
<dbReference type="dictyBase" id="DDB_G0276415">
    <property type="gene designation" value="rps18"/>
</dbReference>
<dbReference type="VEuPathDB" id="AmoebaDB:DDB_G0276415"/>
<dbReference type="eggNOG" id="KOG3311">
    <property type="taxonomic scope" value="Eukaryota"/>
</dbReference>
<dbReference type="HOGENOM" id="CLU_103849_0_1_1"/>
<dbReference type="InParanoid" id="Q869U7"/>
<dbReference type="OMA" id="SYKGVRH"/>
<dbReference type="PhylomeDB" id="Q869U7"/>
<dbReference type="Reactome" id="R-DDI-156827">
    <property type="pathway name" value="L13a-mediated translational silencing of Ceruloplasmin expression"/>
</dbReference>
<dbReference type="Reactome" id="R-DDI-1799339">
    <property type="pathway name" value="SRP-dependent cotranslational protein targeting to membrane"/>
</dbReference>
<dbReference type="Reactome" id="R-DDI-72689">
    <property type="pathway name" value="Formation of a pool of free 40S subunits"/>
</dbReference>
<dbReference type="Reactome" id="R-DDI-72695">
    <property type="pathway name" value="Formation of the ternary complex, and subsequently, the 43S complex"/>
</dbReference>
<dbReference type="Reactome" id="R-DDI-72702">
    <property type="pathway name" value="Ribosomal scanning and start codon recognition"/>
</dbReference>
<dbReference type="Reactome" id="R-DDI-72706">
    <property type="pathway name" value="GTP hydrolysis and joining of the 60S ribosomal subunit"/>
</dbReference>
<dbReference type="Reactome" id="R-DDI-975956">
    <property type="pathway name" value="Nonsense Mediated Decay (NMD) independent of the Exon Junction Complex (EJC)"/>
</dbReference>
<dbReference type="Reactome" id="R-DDI-975957">
    <property type="pathway name" value="Nonsense Mediated Decay (NMD) enhanced by the Exon Junction Complex (EJC)"/>
</dbReference>
<dbReference type="PRO" id="PR:Q869U7"/>
<dbReference type="Proteomes" id="UP000002195">
    <property type="component" value="Chromosome 2"/>
</dbReference>
<dbReference type="GO" id="GO:0005829">
    <property type="term" value="C:cytosol"/>
    <property type="evidence" value="ECO:0000318"/>
    <property type="project" value="GO_Central"/>
</dbReference>
<dbReference type="GO" id="GO:0015935">
    <property type="term" value="C:small ribosomal subunit"/>
    <property type="evidence" value="ECO:0000318"/>
    <property type="project" value="GO_Central"/>
</dbReference>
<dbReference type="GO" id="GO:0019843">
    <property type="term" value="F:rRNA binding"/>
    <property type="evidence" value="ECO:0007669"/>
    <property type="project" value="UniProtKB-KW"/>
</dbReference>
<dbReference type="GO" id="GO:0003735">
    <property type="term" value="F:structural constituent of ribosome"/>
    <property type="evidence" value="ECO:0000250"/>
    <property type="project" value="dictyBase"/>
</dbReference>
<dbReference type="GO" id="GO:0006412">
    <property type="term" value="P:translation"/>
    <property type="evidence" value="ECO:0000250"/>
    <property type="project" value="dictyBase"/>
</dbReference>
<dbReference type="FunFam" id="1.10.8.50:FF:000002">
    <property type="entry name" value="40S ribosomal protein S18"/>
    <property type="match status" value="1"/>
</dbReference>
<dbReference type="FunFam" id="4.10.910.10:FF:000002">
    <property type="entry name" value="40S ribosomal protein S18"/>
    <property type="match status" value="1"/>
</dbReference>
<dbReference type="Gene3D" id="1.10.8.50">
    <property type="match status" value="1"/>
</dbReference>
<dbReference type="Gene3D" id="4.10.910.10">
    <property type="entry name" value="30s ribosomal protein s13, domain 2"/>
    <property type="match status" value="1"/>
</dbReference>
<dbReference type="HAMAP" id="MF_01315">
    <property type="entry name" value="Ribosomal_uS13"/>
    <property type="match status" value="1"/>
</dbReference>
<dbReference type="InterPro" id="IPR027437">
    <property type="entry name" value="Rbsml_uS13_C"/>
</dbReference>
<dbReference type="InterPro" id="IPR001892">
    <property type="entry name" value="Ribosomal_uS13"/>
</dbReference>
<dbReference type="InterPro" id="IPR010979">
    <property type="entry name" value="Ribosomal_uS13-like_H2TH"/>
</dbReference>
<dbReference type="InterPro" id="IPR018269">
    <property type="entry name" value="Ribosomal_uS13_CS"/>
</dbReference>
<dbReference type="NCBIfam" id="NF003140">
    <property type="entry name" value="PRK04053.1"/>
    <property type="match status" value="1"/>
</dbReference>
<dbReference type="PANTHER" id="PTHR10871">
    <property type="entry name" value="30S RIBOSOMAL PROTEIN S13/40S RIBOSOMAL PROTEIN S18"/>
    <property type="match status" value="1"/>
</dbReference>
<dbReference type="PANTHER" id="PTHR10871:SF3">
    <property type="entry name" value="SMALL RIBOSOMAL SUBUNIT PROTEIN US13"/>
    <property type="match status" value="1"/>
</dbReference>
<dbReference type="Pfam" id="PF00416">
    <property type="entry name" value="Ribosomal_S13"/>
    <property type="match status" value="1"/>
</dbReference>
<dbReference type="PIRSF" id="PIRSF002134">
    <property type="entry name" value="Ribosomal_S13"/>
    <property type="match status" value="1"/>
</dbReference>
<dbReference type="SUPFAM" id="SSF46946">
    <property type="entry name" value="S13-like H2TH domain"/>
    <property type="match status" value="1"/>
</dbReference>
<dbReference type="PROSITE" id="PS00646">
    <property type="entry name" value="RIBOSOMAL_S13_1"/>
    <property type="match status" value="1"/>
</dbReference>
<dbReference type="PROSITE" id="PS50159">
    <property type="entry name" value="RIBOSOMAL_S13_2"/>
    <property type="match status" value="1"/>
</dbReference>
<accession>Q869U7</accession>
<accession>Q551Q0</accession>